<comment type="function">
    <text evidence="3 9">Catalyzes the interconversion of D-glucose 1-phosphate (G1P) and D-glucose 6-phosphate (G6P), forming beta-D-glucose 1,6-(bis)phosphate (beta-G16P) as an intermediate. The beta-phosphoglucomutase (Beta-PGM) acts on the beta-C(1) anomer of G1P. Glucose or lactose are used in preference to maltose, which is only utilized after glucose or lactose has been exhausted. It plays a key role in the regulation of the flow of carbohydrate intermediates in glycolysis and the formation of the sugar nucleotide UDP-glucose.</text>
</comment>
<comment type="catalytic activity">
    <reaction evidence="3 5 9">
        <text>beta-D-glucose 1-phosphate = beta-D-glucose 6-phosphate</text>
        <dbReference type="Rhea" id="RHEA:20113"/>
        <dbReference type="ChEBI" id="CHEBI:57684"/>
        <dbReference type="ChEBI" id="CHEBI:58247"/>
        <dbReference type="EC" id="5.4.2.6"/>
    </reaction>
</comment>
<comment type="cofactor">
    <cofactor evidence="1 2 4 5 6 7 8">
        <name>Mg(2+)</name>
        <dbReference type="ChEBI" id="CHEBI:18420"/>
    </cofactor>
    <text evidence="1 2 4 5 7">Binds 1 magnesium ion per subunit.</text>
</comment>
<comment type="activity regulation">
    <text evidence="4 5">Activated by phosphorylation (PubMed:15996095). Competitively inhibited by alpha-D-galactose-1-phosphate.</text>
</comment>
<comment type="biophysicochemical properties">
    <kinetics>
        <KM evidence="5">14.6 uM for beta-glucose 1-phosphate (at pH 7 and 25 degrees Celsius)</KM>
        <KM evidence="5">20 uM for alpha-D-glucose 1,6-bisphosphate (at pH 7 and 25 degrees Celsius)</KM>
        <KM evidence="5">100 uM for alpha-D-fructose 1,6-bisphosphate (at pH 7 and 25 degrees Celsius)</KM>
        <KM evidence="5">270 uM for magnesium (at pH 7 and 25 degrees Celsius)</KM>
        <KM evidence="5">800 uM for acetyl-phosphate (at pH 7 and 25 degrees Celsius)</KM>
    </kinetics>
    <phDependence>
        <text evidence="5">Optimum pH is around 7. Relatively stable in solution within the pH range of 5-9.5.</text>
    </phDependence>
</comment>
<comment type="subunit">
    <text evidence="1 2 4 5 6 7 8 10">Monomer.</text>
</comment>
<comment type="subcellular location">
    <subcellularLocation>
        <location evidence="12">Cytoplasm</location>
    </subcellularLocation>
</comment>
<comment type="induction">
    <text evidence="3 8 9">By maltose, trehalose and sucrose and repressed by glucose and lactose.</text>
</comment>
<comment type="PTM">
    <text evidence="5 6">Autophosphorylated.</text>
</comment>
<comment type="miscellaneous">
    <text>The catalysis proceeds via a phosphoenzyme formed by reaction of an active-site nucleophile with the cofactor glucose 1,6-diphosphate (G1,6-diP). The phosphorylated mutase binds either G1P or G6P and transfers the phosphoryl group to the C(6)OH or C(1)OH, respectively.</text>
</comment>
<comment type="similarity">
    <text evidence="12">Belongs to the HAD-like hydrolase superfamily. CbbY/CbbZ/Gph/YieH family.</text>
</comment>
<protein>
    <recommendedName>
        <fullName evidence="11">Beta-phosphoglucomutase</fullName>
        <shortName evidence="11">Beta-PGM</shortName>
        <ecNumber evidence="3 5 9">5.4.2.6</ecNumber>
    </recommendedName>
</protein>
<gene>
    <name evidence="11" type="primary">pgmB</name>
    <name type="ordered locus">LL0429</name>
    <name type="ORF">L0001</name>
</gene>
<proteinExistence type="evidence at protein level"/>
<organism>
    <name type="scientific">Lactococcus lactis subsp. lactis (strain IL1403)</name>
    <name type="common">Streptococcus lactis</name>
    <dbReference type="NCBI Taxonomy" id="272623"/>
    <lineage>
        <taxon>Bacteria</taxon>
        <taxon>Bacillati</taxon>
        <taxon>Bacillota</taxon>
        <taxon>Bacilli</taxon>
        <taxon>Lactobacillales</taxon>
        <taxon>Streptococcaceae</taxon>
        <taxon>Lactococcus</taxon>
    </lineage>
</organism>
<sequence length="221" mass="24209">MFKAVLFDLDGVITDTAEYHFRAWKALAEEIGINGVDRQFNEQLKGVSREDSLQKILDLADKKVSAEEFKELAKRKNDNYVKMIQDVSPADVYPGILQLLKDLRSNKIKIALASASKNGPFLLEKMNLTGYFDAIADPAEVAASKPAPDIFIAAAHAVGVAPSESIGLEDSQAGIQAIKDSGALPIGVGRPEDLGDDIVIVPDTSYYTLEFLKEVWLQKQK</sequence>
<reference key="1">
    <citation type="journal article" date="1997" name="Microbiology">
        <title>Product formation and phosphoglucomutase activities in Lactococcus lactis: cloning and characterization of a novel phosphoglucomutase gene.</title>
        <authorList>
            <person name="Qian N."/>
            <person name="Stanley G.A."/>
            <person name="Bunte A."/>
            <person name="Raadstroem P."/>
        </authorList>
    </citation>
    <scope>NUCLEOTIDE SEQUENCE [GENOMIC DNA]</scope>
    <scope>PROTEIN SEQUENCE OF 1-15</scope>
    <scope>FUNCTION AS A PHOSPHOGLUCOMUTASE AND IN THE CARBOHYDRATE METABOLISM</scope>
    <scope>CATALYTIC ACTIVITY</scope>
    <scope>INDUCTION</scope>
    <scope>SUBSTRATE SPECIFICITY</scope>
    <scope>NOMENCLATURE</scope>
    <source>
        <strain>ATCC 19435 / DSM 20481 / NCDO 604 / NCIB 6681 / NCTC 6681</strain>
    </source>
</reference>
<reference key="2">
    <citation type="journal article" date="2001" name="Genome Res.">
        <title>The complete genome sequence of the lactic acid bacterium Lactococcus lactis ssp. lactis IL1403.</title>
        <authorList>
            <person name="Bolotin A."/>
            <person name="Wincker P."/>
            <person name="Mauger S."/>
            <person name="Jaillon O."/>
            <person name="Malarme K."/>
            <person name="Weissenbach J."/>
            <person name="Ehrlich S.D."/>
            <person name="Sorokin A."/>
        </authorList>
    </citation>
    <scope>NUCLEOTIDE SEQUENCE [LARGE SCALE GENOMIC DNA]</scope>
    <source>
        <strain>IL1403</strain>
    </source>
</reference>
<reference key="3">
    <citation type="journal article" date="1994" name="J. Bacteriol.">
        <title>Purification and characterization of two phosphoglucomutases from Lactococcus lactis subsp. lactis and their regulation in maltose- and glucose-utilizing cells.</title>
        <authorList>
            <person name="Qian N."/>
            <person name="Stanley G.A."/>
            <person name="Hahn-Hagerdal B."/>
            <person name="Radstrom P."/>
        </authorList>
    </citation>
    <scope>INDUCTION</scope>
    <scope>SUBSTRATE SPECIFICITY</scope>
    <scope>COFACTOR</scope>
    <scope>SUBUNIT</scope>
</reference>
<reference key="4">
    <citation type="journal article" date="2004" name="Biochemistry">
        <title>Analysis of the substrate specificity loop of the HAD superfamily cap domain.</title>
        <authorList>
            <person name="Lahiri S.D."/>
            <person name="Zhang G."/>
            <person name="Dai J."/>
            <person name="Dunaway-Mariano D."/>
            <person name="Allen K.N."/>
        </authorList>
    </citation>
    <scope>FUNCTION AS A BETA-PHOSPHOGLUCOMUTASE</scope>
    <scope>CATALYTIC ACTIVITY</scope>
    <scope>INDUCTION</scope>
    <scope>MUTAGENESIS OF LYS-45; GLY-46; ARG-49 AND SER-52</scope>
    <source>
        <strain>ATCC 19435 / DSM 20481 / NCDO 604 / NCIB 6681 / NCTC 6681</strain>
    </source>
</reference>
<reference evidence="17" key="5">
    <citation type="journal article" date="2002" name="Biochemistry">
        <title>Caught in the act: the structure of phosphorylated beta-phosphoglucomutase from Lactococcus lactis.</title>
        <authorList>
            <person name="Lahiri S.D."/>
            <person name="Zhang G."/>
            <person name="Dunaway-Mariano D."/>
            <person name="Allen K.N."/>
        </authorList>
    </citation>
    <scope>X-RAY CRYSTALLOGRAPHY (2.30 ANGSTROMS) IN COMPLEX WITH MAGNESIUM IONS</scope>
    <scope>REACTION MECHANISM</scope>
    <scope>COFACTOR</scope>
    <scope>SUBUNIT</scope>
</reference>
<reference evidence="18 19" key="6">
    <citation type="journal article" date="2003" name="Science">
        <title>The pentacovalent phosphorus intermediate of a phosphoryl transfer reaction.</title>
        <authorList>
            <person name="Lahiri S.D."/>
            <person name="Zhang G."/>
            <person name="Dunaway-Mariano D."/>
            <person name="Allen K.N."/>
        </authorList>
    </citation>
    <scope>X-RAY CRYSTALLOGRAPHY (1.20 ANGSTROMS) IN COMPLEX WITH SUBSTRATE ANALOGS AND MAGNESIUM IONS</scope>
    <scope>COFACTOR</scope>
    <scope>SUBUNIT</scope>
</reference>
<reference evidence="22" key="7">
    <citation type="journal article" date="2005" name="Biochemistry">
        <title>Catalytic cycling in beta-phosphoglucomutase: a kinetic and structural analysis.</title>
        <authorList>
            <person name="Zhang G."/>
            <person name="Dai J."/>
            <person name="Wang L."/>
            <person name="Dunaway-Mariano D."/>
            <person name="Tremblay L.W."/>
            <person name="Allen K.N."/>
        </authorList>
    </citation>
    <scope>X-RAY CRYSTALLOGRAPHY (1.90 ANGSTROMS) IN COMPLEX WITH MAGNESIUM IONS</scope>
    <scope>CATALYTIC ACTIVITY</scope>
    <scope>COFACTOR</scope>
    <scope>ACTIVITY REGULATION</scope>
    <scope>PHOSPHORYLATION AT ASP-8</scope>
    <scope>MUTAGENESIS OF ASP-8 AND ASP-170</scope>
    <scope>BIOPHYSICOCHEMICAL PROPERTIES</scope>
    <scope>REACTION MECHANISM</scope>
    <scope>SUBUNIT</scope>
    <scope>ACTIVE SITE</scope>
</reference>
<reference evidence="20 21" key="8">
    <citation type="journal article" date="2005" name="J. Am. Chem. Soc.">
        <title>Chemical confirmation of a pentavalent phosphorane in complex with beta-phosphoglucomutase.</title>
        <authorList>
            <person name="Tremblay L.W."/>
            <person name="Zhang G."/>
            <person name="Dai J."/>
            <person name="Dunaway-Mariano D."/>
            <person name="Allen K.N."/>
        </authorList>
    </citation>
    <scope>X-RAY CRYSTALLOGRAPHY (1.90 ANGSTROMS) IN COMPLEX WITH SUBSTRATE ANALOGS AND MAGNESIUM IONS</scope>
    <scope>ACTIVITY REGULATION</scope>
    <scope>SUBUNIT</scope>
    <scope>COFACTOR</scope>
</reference>
<reference evidence="26" key="9">
    <citation type="journal article" date="2009" name="Biochemistry">
        <title>Analysis of the structural determinants underlying discrimination between substrate and solvent in beta-phosphoglucomutase catalysis.</title>
        <authorList>
            <person name="Dai J."/>
            <person name="Finci L."/>
            <person name="Zhang C."/>
            <person name="Lahiri S."/>
            <person name="Zhang G."/>
            <person name="Peisach E."/>
            <person name="Allen K.N."/>
            <person name="Dunaway-Mariano D."/>
        </authorList>
    </citation>
    <scope>X-RAY CRYSTALLOGRAPHY (2.70 ANGSTROMS) IN COMPLEX WITH MAGNESIUM IONS</scope>
    <scope>REACTION MECHANISM</scope>
    <scope>COFACTOR</scope>
    <scope>SUBUNIT</scope>
    <scope>PHOSPHORYLATION AT ASP-8</scope>
    <scope>ACTIVE SITE</scope>
    <scope>MUTAGENESIS OF ASP-10; THR-16; HIS-20 AND LYS-76</scope>
</reference>
<reference key="10">
    <citation type="submission" date="2009-04" db="PDB data bank">
        <title>The role of strain in enzyme catalysed phosphate transfer.</title>
        <authorList>
            <person name="Bowler M.W."/>
            <person name="Baxter N.J."/>
            <person name="Webster C.E."/>
            <person name="Pollard S."/>
            <person name="Alizadeh T."/>
            <person name="Hounslow A.M."/>
            <person name="Cliff M.J."/>
            <person name="Bermel W."/>
            <person name="Williams N.H."/>
            <person name="Hollfelder F."/>
            <person name="Blackburn G.M."/>
            <person name="Waltho J.P."/>
        </authorList>
    </citation>
    <scope>X-RAY CRYSTALLOGRAPHY (1.05 ANGSTROMS) IN COMPLEX WITH SUBSTRATE ANALOGS AND MAGNESIUM IONS</scope>
</reference>
<reference evidence="23 24 25" key="11">
    <citation type="journal article" date="2010" name="Proc. Natl. Acad. Sci. U.S.A.">
        <title>Atomic details of near-transition state conformers for enzyme phosphoryl transfer revealed by MgF-3 rather than by phosphoranes.</title>
        <authorList>
            <person name="Baxter N.J."/>
            <person name="Bowler M.W."/>
            <person name="Alizadeh T."/>
            <person name="Cliff M.J."/>
            <person name="Hounslow A.M."/>
            <person name="Wu B."/>
            <person name="Berkowitz D.B."/>
            <person name="Williams N.H."/>
            <person name="Blackburn G.M."/>
            <person name="Waltho J.P."/>
        </authorList>
    </citation>
    <scope>X-RAY CRYSTALLOGRAPHY (1.30 ANGSTROMS) IN COMPLEX WITH BETA-D-GLUCOSE 6-PHOSPHATE AND MAGNESIUM IONS</scope>
    <scope>COFACTOR</scope>
    <scope>SUBUNIT</scope>
</reference>
<evidence type="ECO:0000269" key="1">
    <source>
    </source>
</evidence>
<evidence type="ECO:0000269" key="2">
    <source>
    </source>
</evidence>
<evidence type="ECO:0000269" key="3">
    <source>
    </source>
</evidence>
<evidence type="ECO:0000269" key="4">
    <source>
    </source>
</evidence>
<evidence type="ECO:0000269" key="5">
    <source>
    </source>
</evidence>
<evidence type="ECO:0000269" key="6">
    <source>
    </source>
</evidence>
<evidence type="ECO:0000269" key="7">
    <source>
    </source>
</evidence>
<evidence type="ECO:0000269" key="8">
    <source>
    </source>
</evidence>
<evidence type="ECO:0000269" key="9">
    <source>
    </source>
</evidence>
<evidence type="ECO:0000269" key="10">
    <source ref="10"/>
</evidence>
<evidence type="ECO:0000303" key="11">
    <source>
    </source>
</evidence>
<evidence type="ECO:0000305" key="12"/>
<evidence type="ECO:0000305" key="13">
    <source>
    </source>
</evidence>
<evidence type="ECO:0000305" key="14">
    <source>
    </source>
</evidence>
<evidence type="ECO:0000305" key="15">
    <source>
    </source>
</evidence>
<evidence type="ECO:0000305" key="16">
    <source>
    </source>
</evidence>
<evidence type="ECO:0007744" key="17">
    <source>
        <dbReference type="PDB" id="1LVH"/>
    </source>
</evidence>
<evidence type="ECO:0007744" key="18">
    <source>
        <dbReference type="PDB" id="1O03"/>
    </source>
</evidence>
<evidence type="ECO:0007744" key="19">
    <source>
        <dbReference type="PDB" id="1O08"/>
    </source>
</evidence>
<evidence type="ECO:0007744" key="20">
    <source>
        <dbReference type="PDB" id="1Z4N"/>
    </source>
</evidence>
<evidence type="ECO:0007744" key="21">
    <source>
        <dbReference type="PDB" id="1Z4O"/>
    </source>
</evidence>
<evidence type="ECO:0007744" key="22">
    <source>
        <dbReference type="PDB" id="1ZOL"/>
    </source>
</evidence>
<evidence type="ECO:0007744" key="23">
    <source>
        <dbReference type="PDB" id="2WF5"/>
    </source>
</evidence>
<evidence type="ECO:0007744" key="24">
    <source>
        <dbReference type="PDB" id="2WF6"/>
    </source>
</evidence>
<evidence type="ECO:0007744" key="25">
    <source>
        <dbReference type="PDB" id="2WHE"/>
    </source>
</evidence>
<evidence type="ECO:0007744" key="26">
    <source>
        <dbReference type="PDB" id="3FM9"/>
    </source>
</evidence>
<evidence type="ECO:0007829" key="27">
    <source>
        <dbReference type="PDB" id="1O08"/>
    </source>
</evidence>
<evidence type="ECO:0007829" key="28">
    <source>
        <dbReference type="PDB" id="6I03"/>
    </source>
</evidence>
<evidence type="ECO:0007829" key="29">
    <source>
        <dbReference type="PDB" id="8Q1F"/>
    </source>
</evidence>
<accession>P71447</accession>
<keyword id="KW-0002">3D-structure</keyword>
<keyword id="KW-0119">Carbohydrate metabolism</keyword>
<keyword id="KW-0963">Cytoplasm</keyword>
<keyword id="KW-0903">Direct protein sequencing</keyword>
<keyword id="KW-0413">Isomerase</keyword>
<keyword id="KW-0460">Magnesium</keyword>
<keyword id="KW-0479">Metal-binding</keyword>
<keyword id="KW-0597">Phosphoprotein</keyword>
<keyword id="KW-1185">Reference proteome</keyword>
<feature type="chain" id="PRO_0000108053" description="Beta-phosphoglucomutase">
    <location>
        <begin position="1"/>
        <end position="221"/>
    </location>
</feature>
<feature type="active site" description="Nucleophile" evidence="15 16">
    <location>
        <position position="8"/>
    </location>
</feature>
<feature type="active site" description="Proton donor/acceptor" evidence="15 16">
    <location>
        <position position="10"/>
    </location>
</feature>
<feature type="binding site" evidence="1 2 4 5 7 17 18 19 20 21 22 23 24 25">
    <location>
        <position position="8"/>
    </location>
    <ligand>
        <name>Mg(2+)</name>
        <dbReference type="ChEBI" id="CHEBI:18420"/>
    </ligand>
</feature>
<feature type="binding site" evidence="7 23 24">
    <location>
        <position position="10"/>
    </location>
    <ligand>
        <name>beta-D-glucose 6-phosphate</name>
        <dbReference type="ChEBI" id="CHEBI:58247"/>
    </ligand>
</feature>
<feature type="binding site" evidence="1 2 4 5 7 17 18 19 20 21 22 23 24 25">
    <location>
        <position position="10"/>
    </location>
    <ligand>
        <name>Mg(2+)</name>
        <dbReference type="ChEBI" id="CHEBI:18420"/>
    </ligand>
</feature>
<feature type="binding site" evidence="7 13 18 19 23 24">
    <location>
        <position position="46"/>
    </location>
    <ligand>
        <name>beta-D-glucose 6-phosphate</name>
        <dbReference type="ChEBI" id="CHEBI:58247"/>
    </ligand>
</feature>
<feature type="binding site" evidence="7 13 18 19 23 24">
    <location>
        <position position="47"/>
    </location>
    <ligand>
        <name>beta-D-glucose 6-phosphate</name>
        <dbReference type="ChEBI" id="CHEBI:58247"/>
    </ligand>
</feature>
<feature type="binding site" evidence="7 13 14 18 19 20 21 23 24">
    <location>
        <position position="49"/>
    </location>
    <ligand>
        <name>beta-D-glucose 6-phosphate</name>
        <dbReference type="ChEBI" id="CHEBI:58247"/>
    </ligand>
</feature>
<feature type="binding site" evidence="7 13 14 18 19 20 21 23 24">
    <location>
        <position position="116"/>
    </location>
    <ligand>
        <name>beta-D-glucose 6-phosphate</name>
        <dbReference type="ChEBI" id="CHEBI:58247"/>
    </ligand>
</feature>
<feature type="binding site" evidence="7 13 14 18 19 20 21 23 24">
    <location>
        <position position="117"/>
    </location>
    <ligand>
        <name>beta-D-glucose 6-phosphate</name>
        <dbReference type="ChEBI" id="CHEBI:58247"/>
    </ligand>
</feature>
<feature type="binding site" evidence="7 13 14 18 19 20 21 23 24">
    <location>
        <position position="118"/>
    </location>
    <ligand>
        <name>beta-D-glucose 6-phosphate</name>
        <dbReference type="ChEBI" id="CHEBI:58247"/>
    </ligand>
</feature>
<feature type="binding site" evidence="1 2 4 5 7 17 18 19 20 21 22 23 24 25">
    <location>
        <position position="170"/>
    </location>
    <ligand>
        <name>Mg(2+)</name>
        <dbReference type="ChEBI" id="CHEBI:18420"/>
    </ligand>
</feature>
<feature type="site" description="Important for catalytic activity and assists the phosphoryl transfer reaction to Asp8 by balancing charge and orienting the reacting groups">
    <location>
        <position position="114"/>
    </location>
</feature>
<feature type="site" description="Important for catalytic activity and assists the phosphoryl transfer reaction to Asp8 by balancing charge and orienting the reacting groups">
    <location>
        <position position="145"/>
    </location>
</feature>
<feature type="modified residue" description="4-aspartylphosphate" evidence="5 6">
    <location>
        <position position="8"/>
    </location>
</feature>
<feature type="mutagenesis site" description="Inactive." evidence="5">
    <original>D</original>
    <variation>A</variation>
    <variation>E</variation>
    <location>
        <position position="8"/>
    </location>
</feature>
<feature type="mutagenesis site" description="Inactive." evidence="6">
    <original>D</original>
    <variation>A</variation>
    <variation>E</variation>
    <variation>N</variation>
    <variation>S</variation>
    <location>
        <position position="10"/>
    </location>
</feature>
<feature type="mutagenesis site" description="500-fold reduction in the rate constant for Asp-8 phosphorylation by beta-G1,6bisP. 6,700-fold reduction in the apparent rate constant for cycling of the phosphorylated enzyme to convert beta-G1P to G6P. 13-fold increase in the estimated rate constant for phosphoryl transfer from the phospho-Asp8 to water." evidence="6">
    <original>T</original>
    <variation>P</variation>
    <location>
        <position position="16"/>
    </location>
</feature>
<feature type="mutagenesis site" description="Impairs Asp-8 phosphorylation by beta-G1,6bisP and phosphoryl transfer from the phospho-Asp8 to the substrate beta-G1P." evidence="6">
    <original>H</original>
    <variation>A</variation>
    <location>
        <position position="20"/>
    </location>
</feature>
<feature type="mutagenesis site" description="300-fold reduction in the conversion of beta-G1P to G6P in the presence of beta-G1,6bisP." evidence="6">
    <original>H</original>
    <variation>N</variation>
    <location>
        <position position="20"/>
    </location>
</feature>
<feature type="mutagenesis site" description="8-fold reduction in the conversion of beta-G1P to G6P in the presence of beta-G1,6bisP." evidence="6">
    <original>H</original>
    <variation>Q</variation>
    <location>
        <position position="20"/>
    </location>
</feature>
<feature type="mutagenesis site" description="20'000-fold decrease in catalytic efficiency." evidence="3">
    <original>K</original>
    <variation>A</variation>
    <location>
        <position position="45"/>
    </location>
</feature>
<feature type="mutagenesis site" description="1'000'000-fold decrease in catalytic efficiency." evidence="3">
    <original>G</original>
    <variation>A</variation>
    <location>
        <position position="46"/>
    </location>
</feature>
<feature type="mutagenesis site" description="100'000-fold decrease in catalytic efficiency." evidence="3">
    <original>G</original>
    <variation>P</variation>
    <location>
        <position position="46"/>
    </location>
</feature>
<feature type="mutagenesis site" description="10'000-fold decrease in catalytic efficiency." evidence="3">
    <original>G</original>
    <variation>V</variation>
    <location>
        <position position="46"/>
    </location>
</feature>
<feature type="mutagenesis site" description="1'000'000-fold decrease in catalytic efficiency." evidence="3">
    <original>R</original>
    <variation>K</variation>
    <location>
        <position position="49"/>
    </location>
</feature>
<feature type="mutagenesis site" description="Wild-type activity." evidence="3">
    <original>S</original>
    <variation>A</variation>
    <location>
        <position position="52"/>
    </location>
</feature>
<feature type="mutagenesis site" description="100-fold reduction in the conversion of beta-G1P to G6P in the presence of beta-G1,6bisP." evidence="6">
    <original>K</original>
    <variation>A</variation>
    <location>
        <position position="76"/>
    </location>
</feature>
<feature type="mutagenesis site" description="Impaired, but active with an increase in the affinity for G1P." evidence="5">
    <original>D</original>
    <variation>A</variation>
    <location>
        <position position="170"/>
    </location>
</feature>
<feature type="sequence conflict" description="In Ref. 1; CAA94734." evidence="12" ref="1">
    <original>K</original>
    <variation>R</variation>
    <location>
        <position position="125"/>
    </location>
</feature>
<feature type="sequence conflict" description="In Ref. 1; CAA94734." evidence="12" ref="1">
    <original>Y</original>
    <variation>H</variation>
    <location>
        <position position="206"/>
    </location>
</feature>
<feature type="strand" evidence="29">
    <location>
        <begin position="4"/>
        <end position="7"/>
    </location>
</feature>
<feature type="turn" evidence="29">
    <location>
        <begin position="11"/>
        <end position="13"/>
    </location>
</feature>
<feature type="helix" evidence="29">
    <location>
        <begin position="17"/>
        <end position="30"/>
    </location>
</feature>
<feature type="helix" evidence="29">
    <location>
        <begin position="38"/>
        <end position="41"/>
    </location>
</feature>
<feature type="turn" evidence="29">
    <location>
        <begin position="42"/>
        <end position="46"/>
    </location>
</feature>
<feature type="helix" evidence="29">
    <location>
        <begin position="49"/>
        <end position="59"/>
    </location>
</feature>
<feature type="strand" evidence="27">
    <location>
        <begin position="60"/>
        <end position="62"/>
    </location>
</feature>
<feature type="helix" evidence="29">
    <location>
        <begin position="66"/>
        <end position="83"/>
    </location>
</feature>
<feature type="turn" evidence="29">
    <location>
        <begin position="84"/>
        <end position="86"/>
    </location>
</feature>
<feature type="helix" evidence="29">
    <location>
        <begin position="89"/>
        <end position="91"/>
    </location>
</feature>
<feature type="helix" evidence="29">
    <location>
        <begin position="96"/>
        <end position="105"/>
    </location>
</feature>
<feature type="strand" evidence="29">
    <location>
        <begin position="109"/>
        <end position="112"/>
    </location>
</feature>
<feature type="helix" evidence="29">
    <location>
        <begin position="119"/>
        <end position="125"/>
    </location>
</feature>
<feature type="helix" evidence="29">
    <location>
        <begin position="129"/>
        <end position="131"/>
    </location>
</feature>
<feature type="strand" evidence="29">
    <location>
        <begin position="133"/>
        <end position="135"/>
    </location>
</feature>
<feature type="helix" evidence="29">
    <location>
        <begin position="138"/>
        <end position="140"/>
    </location>
</feature>
<feature type="strand" evidence="28">
    <location>
        <begin position="141"/>
        <end position="143"/>
    </location>
</feature>
<feature type="helix" evidence="29">
    <location>
        <begin position="149"/>
        <end position="157"/>
    </location>
</feature>
<feature type="helix" evidence="29">
    <location>
        <begin position="162"/>
        <end position="164"/>
    </location>
</feature>
<feature type="strand" evidence="29">
    <location>
        <begin position="165"/>
        <end position="171"/>
    </location>
</feature>
<feature type="helix" evidence="29">
    <location>
        <begin position="172"/>
        <end position="181"/>
    </location>
</feature>
<feature type="strand" evidence="29">
    <location>
        <begin position="184"/>
        <end position="189"/>
    </location>
</feature>
<feature type="helix" evidence="29">
    <location>
        <begin position="191"/>
        <end position="194"/>
    </location>
</feature>
<feature type="strand" evidence="29">
    <location>
        <begin position="196"/>
        <end position="203"/>
    </location>
</feature>
<feature type="helix" evidence="29">
    <location>
        <begin position="204"/>
        <end position="206"/>
    </location>
</feature>
<feature type="helix" evidence="29">
    <location>
        <begin position="209"/>
        <end position="219"/>
    </location>
</feature>
<dbReference type="EC" id="5.4.2.6" evidence="3 5 9"/>
<dbReference type="EMBL" id="Z70730">
    <property type="protein sequence ID" value="CAA94734.1"/>
    <property type="molecule type" value="Genomic_DNA"/>
</dbReference>
<dbReference type="EMBL" id="AE005176">
    <property type="protein sequence ID" value="AAK04527.1"/>
    <property type="molecule type" value="Genomic_DNA"/>
</dbReference>
<dbReference type="PIR" id="E86678">
    <property type="entry name" value="E86678"/>
</dbReference>
<dbReference type="RefSeq" id="NP_266585.1">
    <property type="nucleotide sequence ID" value="NC_002662.1"/>
</dbReference>
<dbReference type="RefSeq" id="WP_010905331.1">
    <property type="nucleotide sequence ID" value="NC_002662.1"/>
</dbReference>
<dbReference type="PDB" id="1LVH">
    <property type="method" value="X-ray"/>
    <property type="resolution" value="2.30 A"/>
    <property type="chains" value="A/B=1-221"/>
</dbReference>
<dbReference type="PDB" id="1O03">
    <property type="method" value="X-ray"/>
    <property type="resolution" value="1.40 A"/>
    <property type="chains" value="A=1-221"/>
</dbReference>
<dbReference type="PDB" id="1O08">
    <property type="method" value="X-ray"/>
    <property type="resolution" value="1.20 A"/>
    <property type="chains" value="A=1-221"/>
</dbReference>
<dbReference type="PDB" id="1Z4N">
    <property type="method" value="X-ray"/>
    <property type="resolution" value="1.97 A"/>
    <property type="chains" value="A/B=1-221"/>
</dbReference>
<dbReference type="PDB" id="1Z4O">
    <property type="method" value="X-ray"/>
    <property type="resolution" value="1.90 A"/>
    <property type="chains" value="A/B=1-221"/>
</dbReference>
<dbReference type="PDB" id="1ZOL">
    <property type="method" value="X-ray"/>
    <property type="resolution" value="1.90 A"/>
    <property type="chains" value="A=1-221"/>
</dbReference>
<dbReference type="PDB" id="2WF5">
    <property type="method" value="X-ray"/>
    <property type="resolution" value="1.30 A"/>
    <property type="chains" value="A=1-221"/>
</dbReference>
<dbReference type="PDB" id="2WF6">
    <property type="method" value="X-ray"/>
    <property type="resolution" value="1.40 A"/>
    <property type="chains" value="A=1-221"/>
</dbReference>
<dbReference type="PDB" id="2WF7">
    <property type="method" value="X-ray"/>
    <property type="resolution" value="1.05 A"/>
    <property type="chains" value="A=1-221"/>
</dbReference>
<dbReference type="PDB" id="2WF8">
    <property type="method" value="X-ray"/>
    <property type="resolution" value="1.20 A"/>
    <property type="chains" value="A=1-221"/>
</dbReference>
<dbReference type="PDB" id="2WF9">
    <property type="method" value="X-ray"/>
    <property type="resolution" value="1.40 A"/>
    <property type="chains" value="A=1-221"/>
</dbReference>
<dbReference type="PDB" id="2WFA">
    <property type="method" value="X-ray"/>
    <property type="resolution" value="1.65 A"/>
    <property type="chains" value="A=1-221"/>
</dbReference>
<dbReference type="PDB" id="2WHE">
    <property type="method" value="X-ray"/>
    <property type="resolution" value="1.55 A"/>
    <property type="chains" value="A=1-221"/>
</dbReference>
<dbReference type="PDB" id="3FM9">
    <property type="method" value="X-ray"/>
    <property type="resolution" value="2.70 A"/>
    <property type="chains" value="A=1-221"/>
</dbReference>
<dbReference type="PDB" id="3ZI4">
    <property type="method" value="X-ray"/>
    <property type="resolution" value="1.33 A"/>
    <property type="chains" value="A=1-221"/>
</dbReference>
<dbReference type="PDB" id="4C4R">
    <property type="method" value="X-ray"/>
    <property type="resolution" value="1.10 A"/>
    <property type="chains" value="A=1-221"/>
</dbReference>
<dbReference type="PDB" id="4C4S">
    <property type="method" value="X-ray"/>
    <property type="resolution" value="1.50 A"/>
    <property type="chains" value="A=1-221"/>
</dbReference>
<dbReference type="PDB" id="4C4T">
    <property type="method" value="X-ray"/>
    <property type="resolution" value="1.50 A"/>
    <property type="chains" value="A=1-221"/>
</dbReference>
<dbReference type="PDB" id="5O6P">
    <property type="method" value="X-ray"/>
    <property type="resolution" value="2.20 A"/>
    <property type="chains" value="A=1-221"/>
</dbReference>
<dbReference type="PDB" id="5O6R">
    <property type="method" value="X-ray"/>
    <property type="resolution" value="1.36 A"/>
    <property type="chains" value="A=1-221"/>
</dbReference>
<dbReference type="PDB" id="5OJZ">
    <property type="method" value="X-ray"/>
    <property type="resolution" value="1.30 A"/>
    <property type="chains" value="A=1-220"/>
</dbReference>
<dbReference type="PDB" id="5OK0">
    <property type="method" value="X-ray"/>
    <property type="resolution" value="2.15 A"/>
    <property type="chains" value="A=1-218"/>
</dbReference>
<dbReference type="PDB" id="5OK1">
    <property type="method" value="X-ray"/>
    <property type="resolution" value="1.86 A"/>
    <property type="chains" value="A=1-218"/>
</dbReference>
<dbReference type="PDB" id="5OK2">
    <property type="method" value="X-ray"/>
    <property type="resolution" value="1.10 A"/>
    <property type="chains" value="A=1-218"/>
</dbReference>
<dbReference type="PDB" id="5OLW">
    <property type="method" value="X-ray"/>
    <property type="resolution" value="2.28 A"/>
    <property type="chains" value="A/B=1-221"/>
</dbReference>
<dbReference type="PDB" id="5OLX">
    <property type="method" value="X-ray"/>
    <property type="resolution" value="1.38 A"/>
    <property type="chains" value="A=1-221"/>
</dbReference>
<dbReference type="PDB" id="5OLY">
    <property type="method" value="X-ray"/>
    <property type="resolution" value="2.00 A"/>
    <property type="chains" value="A/G=1-221"/>
</dbReference>
<dbReference type="PDB" id="6H8U">
    <property type="method" value="X-ray"/>
    <property type="resolution" value="1.90 A"/>
    <property type="chains" value="A=1-221"/>
</dbReference>
<dbReference type="PDB" id="6H8V">
    <property type="method" value="X-ray"/>
    <property type="resolution" value="1.84 A"/>
    <property type="chains" value="A/B=1-221"/>
</dbReference>
<dbReference type="PDB" id="6H8W">
    <property type="method" value="X-ray"/>
    <property type="resolution" value="1.98 A"/>
    <property type="chains" value="A=1-221"/>
</dbReference>
<dbReference type="PDB" id="6H8X">
    <property type="method" value="X-ray"/>
    <property type="resolution" value="1.83 A"/>
    <property type="chains" value="A/B=1-221"/>
</dbReference>
<dbReference type="PDB" id="6H8Y">
    <property type="method" value="X-ray"/>
    <property type="resolution" value="1.89 A"/>
    <property type="chains" value="A=1-221"/>
</dbReference>
<dbReference type="PDB" id="6H8Z">
    <property type="method" value="X-ray"/>
    <property type="resolution" value="1.60 A"/>
    <property type="chains" value="A=1-221"/>
</dbReference>
<dbReference type="PDB" id="6H90">
    <property type="method" value="X-ray"/>
    <property type="resolution" value="1.31 A"/>
    <property type="chains" value="A=1-221"/>
</dbReference>
<dbReference type="PDB" id="6H91">
    <property type="method" value="X-ray"/>
    <property type="resolution" value="2.38 A"/>
    <property type="chains" value="A/B=1-221"/>
</dbReference>
<dbReference type="PDB" id="6H92">
    <property type="method" value="X-ray"/>
    <property type="resolution" value="2.60 A"/>
    <property type="chains" value="A/B=1-221"/>
</dbReference>
<dbReference type="PDB" id="6H93">
    <property type="method" value="X-ray"/>
    <property type="resolution" value="1.77 A"/>
    <property type="chains" value="A/B=1-221"/>
</dbReference>
<dbReference type="PDB" id="6H94">
    <property type="method" value="X-ray"/>
    <property type="resolution" value="1.49 A"/>
    <property type="chains" value="A=1-221"/>
</dbReference>
<dbReference type="PDB" id="6HDF">
    <property type="method" value="X-ray"/>
    <property type="resolution" value="1.40 A"/>
    <property type="chains" value="A/B=1-221"/>
</dbReference>
<dbReference type="PDB" id="6HDG">
    <property type="method" value="X-ray"/>
    <property type="resolution" value="1.15 A"/>
    <property type="chains" value="A=1-221"/>
</dbReference>
<dbReference type="PDB" id="6HDH">
    <property type="method" value="X-ray"/>
    <property type="resolution" value="1.62 A"/>
    <property type="chains" value="A/B=1-221"/>
</dbReference>
<dbReference type="PDB" id="6HDI">
    <property type="method" value="X-ray"/>
    <property type="resolution" value="2.03 A"/>
    <property type="chains" value="A/B=1-221"/>
</dbReference>
<dbReference type="PDB" id="6HDJ">
    <property type="method" value="X-ray"/>
    <property type="resolution" value="1.16 A"/>
    <property type="chains" value="A=1-221"/>
</dbReference>
<dbReference type="PDB" id="6HDK">
    <property type="method" value="X-ray"/>
    <property type="resolution" value="1.24 A"/>
    <property type="chains" value="A=1-221"/>
</dbReference>
<dbReference type="PDB" id="6HDL">
    <property type="method" value="X-ray"/>
    <property type="resolution" value="1.16 A"/>
    <property type="chains" value="A=1-221"/>
</dbReference>
<dbReference type="PDB" id="6HDM">
    <property type="method" value="X-ray"/>
    <property type="resolution" value="1.30 A"/>
    <property type="chains" value="A=1-221"/>
</dbReference>
<dbReference type="PDB" id="6I03">
    <property type="method" value="X-ray"/>
    <property type="resolution" value="1.02 A"/>
    <property type="chains" value="A=1-221"/>
</dbReference>
<dbReference type="PDB" id="6QZG">
    <property type="method" value="X-ray"/>
    <property type="resolution" value="2.47 A"/>
    <property type="chains" value="A/B=1-221"/>
</dbReference>
<dbReference type="PDB" id="6YDJ">
    <property type="method" value="X-ray"/>
    <property type="resolution" value="1.04 A"/>
    <property type="chains" value="A=1-221"/>
</dbReference>
<dbReference type="PDB" id="6YDK">
    <property type="method" value="X-ray"/>
    <property type="resolution" value="2.02 A"/>
    <property type="chains" value="A=1-221"/>
</dbReference>
<dbReference type="PDB" id="6YDL">
    <property type="method" value="X-ray"/>
    <property type="resolution" value="1.52 A"/>
    <property type="chains" value="A=1-221"/>
</dbReference>
<dbReference type="PDB" id="6YDM">
    <property type="method" value="X-ray"/>
    <property type="resolution" value="2.10 A"/>
    <property type="chains" value="A/B=1-221"/>
</dbReference>
<dbReference type="PDB" id="8Q1C">
    <property type="method" value="X-ray"/>
    <property type="resolution" value="1.68 A"/>
    <property type="chains" value="A/B=1-221"/>
</dbReference>
<dbReference type="PDB" id="8Q1D">
    <property type="method" value="X-ray"/>
    <property type="resolution" value="1.75 A"/>
    <property type="chains" value="A=1-221"/>
</dbReference>
<dbReference type="PDB" id="8Q1E">
    <property type="method" value="X-ray"/>
    <property type="resolution" value="1.23 A"/>
    <property type="chains" value="A=1-221"/>
</dbReference>
<dbReference type="PDB" id="8Q1F">
    <property type="method" value="X-ray"/>
    <property type="resolution" value="1.01 A"/>
    <property type="chains" value="A/B=1-221"/>
</dbReference>
<dbReference type="PDBsum" id="1LVH"/>
<dbReference type="PDBsum" id="1O03"/>
<dbReference type="PDBsum" id="1O08"/>
<dbReference type="PDBsum" id="1Z4N"/>
<dbReference type="PDBsum" id="1Z4O"/>
<dbReference type="PDBsum" id="1ZOL"/>
<dbReference type="PDBsum" id="2WF5"/>
<dbReference type="PDBsum" id="2WF6"/>
<dbReference type="PDBsum" id="2WF7"/>
<dbReference type="PDBsum" id="2WF8"/>
<dbReference type="PDBsum" id="2WF9"/>
<dbReference type="PDBsum" id="2WFA"/>
<dbReference type="PDBsum" id="2WHE"/>
<dbReference type="PDBsum" id="3FM9"/>
<dbReference type="PDBsum" id="3ZI4"/>
<dbReference type="PDBsum" id="4C4R"/>
<dbReference type="PDBsum" id="4C4S"/>
<dbReference type="PDBsum" id="4C4T"/>
<dbReference type="PDBsum" id="5O6P"/>
<dbReference type="PDBsum" id="5O6R"/>
<dbReference type="PDBsum" id="5OJZ"/>
<dbReference type="PDBsum" id="5OK0"/>
<dbReference type="PDBsum" id="5OK1"/>
<dbReference type="PDBsum" id="5OK2"/>
<dbReference type="PDBsum" id="5OLW"/>
<dbReference type="PDBsum" id="5OLX"/>
<dbReference type="PDBsum" id="5OLY"/>
<dbReference type="PDBsum" id="6H8U"/>
<dbReference type="PDBsum" id="6H8V"/>
<dbReference type="PDBsum" id="6H8W"/>
<dbReference type="PDBsum" id="6H8X"/>
<dbReference type="PDBsum" id="6H8Y"/>
<dbReference type="PDBsum" id="6H8Z"/>
<dbReference type="PDBsum" id="6H90"/>
<dbReference type="PDBsum" id="6H91"/>
<dbReference type="PDBsum" id="6H92"/>
<dbReference type="PDBsum" id="6H93"/>
<dbReference type="PDBsum" id="6H94"/>
<dbReference type="PDBsum" id="6HDF"/>
<dbReference type="PDBsum" id="6HDG"/>
<dbReference type="PDBsum" id="6HDH"/>
<dbReference type="PDBsum" id="6HDI"/>
<dbReference type="PDBsum" id="6HDJ"/>
<dbReference type="PDBsum" id="6HDK"/>
<dbReference type="PDBsum" id="6HDL"/>
<dbReference type="PDBsum" id="6HDM"/>
<dbReference type="PDBsum" id="6I03"/>
<dbReference type="PDBsum" id="6QZG"/>
<dbReference type="PDBsum" id="6YDJ"/>
<dbReference type="PDBsum" id="6YDK"/>
<dbReference type="PDBsum" id="6YDL"/>
<dbReference type="PDBsum" id="6YDM"/>
<dbReference type="PDBsum" id="8Q1C"/>
<dbReference type="PDBsum" id="8Q1D"/>
<dbReference type="PDBsum" id="8Q1E"/>
<dbReference type="PDBsum" id="8Q1F"/>
<dbReference type="BMRB" id="P71447"/>
<dbReference type="SMR" id="P71447"/>
<dbReference type="DrugBank" id="DB02317">
    <property type="generic name" value="Alpha-D-Galactose-1-Phosphate"/>
</dbReference>
<dbReference type="DrugBank" id="DB02835">
    <property type="generic name" value="Alpha-D-Glucose 1,6-Bisphosphate"/>
</dbReference>
<dbReference type="DrugBank" id="DB01857">
    <property type="generic name" value="Phosphoaspartate"/>
</dbReference>
<dbReference type="PaxDb" id="272623-L0001"/>
<dbReference type="EnsemblBacteria" id="AAK04527">
    <property type="protein sequence ID" value="AAK04527"/>
    <property type="gene ID" value="L0001"/>
</dbReference>
<dbReference type="KEGG" id="lla:L0001"/>
<dbReference type="PATRIC" id="fig|272623.7.peg.467"/>
<dbReference type="eggNOG" id="COG0637">
    <property type="taxonomic scope" value="Bacteria"/>
</dbReference>
<dbReference type="HOGENOM" id="CLU_045011_13_3_9"/>
<dbReference type="OrthoDB" id="9797743at2"/>
<dbReference type="BioCyc" id="MetaCyc:MONOMER-5821"/>
<dbReference type="BRENDA" id="5.4.2.6">
    <property type="organism ID" value="2903"/>
</dbReference>
<dbReference type="SABIO-RK" id="P71447"/>
<dbReference type="EvolutionaryTrace" id="P71447"/>
<dbReference type="Proteomes" id="UP000002196">
    <property type="component" value="Chromosome"/>
</dbReference>
<dbReference type="GO" id="GO:0005737">
    <property type="term" value="C:cytoplasm"/>
    <property type="evidence" value="ECO:0007669"/>
    <property type="project" value="UniProtKB-SubCell"/>
</dbReference>
<dbReference type="GO" id="GO:0008801">
    <property type="term" value="F:beta-phosphoglucomutase activity"/>
    <property type="evidence" value="ECO:0000314"/>
    <property type="project" value="UniProtKB"/>
</dbReference>
<dbReference type="GO" id="GO:0000287">
    <property type="term" value="F:magnesium ion binding"/>
    <property type="evidence" value="ECO:0000314"/>
    <property type="project" value="UniProtKB"/>
</dbReference>
<dbReference type="GO" id="GO:0005975">
    <property type="term" value="P:carbohydrate metabolic process"/>
    <property type="evidence" value="ECO:0000314"/>
    <property type="project" value="UniProtKB"/>
</dbReference>
<dbReference type="CDD" id="cd02598">
    <property type="entry name" value="HAD_BPGM"/>
    <property type="match status" value="1"/>
</dbReference>
<dbReference type="FunFam" id="1.10.150.240:FF:000010">
    <property type="entry name" value="Beta-phosphoglucomutase"/>
    <property type="match status" value="1"/>
</dbReference>
<dbReference type="Gene3D" id="3.40.50.1000">
    <property type="entry name" value="HAD superfamily/HAD-like"/>
    <property type="match status" value="1"/>
</dbReference>
<dbReference type="Gene3D" id="1.10.150.240">
    <property type="entry name" value="Putative phosphatase, domain 2"/>
    <property type="match status" value="1"/>
</dbReference>
<dbReference type="InterPro" id="IPR010976">
    <property type="entry name" value="B-phosphoglucomutase_hydrolase"/>
</dbReference>
<dbReference type="InterPro" id="IPR010972">
    <property type="entry name" value="Beta-PGM"/>
</dbReference>
<dbReference type="InterPro" id="IPR051600">
    <property type="entry name" value="Beta-PGM-like"/>
</dbReference>
<dbReference type="InterPro" id="IPR036412">
    <property type="entry name" value="HAD-like_sf"/>
</dbReference>
<dbReference type="InterPro" id="IPR006439">
    <property type="entry name" value="HAD-SF_hydro_IA"/>
</dbReference>
<dbReference type="InterPro" id="IPR023214">
    <property type="entry name" value="HAD_sf"/>
</dbReference>
<dbReference type="InterPro" id="IPR023198">
    <property type="entry name" value="PGP-like_dom2"/>
</dbReference>
<dbReference type="NCBIfam" id="TIGR01990">
    <property type="entry name" value="bPGM"/>
    <property type="match status" value="1"/>
</dbReference>
<dbReference type="NCBIfam" id="TIGR01509">
    <property type="entry name" value="HAD-SF-IA-v3"/>
    <property type="match status" value="1"/>
</dbReference>
<dbReference type="NCBIfam" id="TIGR02009">
    <property type="entry name" value="PGMB-YQAB-SF"/>
    <property type="match status" value="1"/>
</dbReference>
<dbReference type="PANTHER" id="PTHR46193">
    <property type="entry name" value="6-PHOSPHOGLUCONATE PHOSPHATASE"/>
    <property type="match status" value="1"/>
</dbReference>
<dbReference type="PANTHER" id="PTHR46193:SF18">
    <property type="entry name" value="HEXITOL PHOSPHATASE B"/>
    <property type="match status" value="1"/>
</dbReference>
<dbReference type="Pfam" id="PF00702">
    <property type="entry name" value="Hydrolase"/>
    <property type="match status" value="1"/>
</dbReference>
<dbReference type="PRINTS" id="PR00413">
    <property type="entry name" value="HADHALOGNASE"/>
</dbReference>
<dbReference type="SFLD" id="SFLDF00046">
    <property type="entry name" value="beta-phosphoglucomutase"/>
    <property type="match status" value="1"/>
</dbReference>
<dbReference type="SFLD" id="SFLDG01129">
    <property type="entry name" value="C1.5:_HAD__Beta-PGM__Phosphata"/>
    <property type="match status" value="1"/>
</dbReference>
<dbReference type="SUPFAM" id="SSF56784">
    <property type="entry name" value="HAD-like"/>
    <property type="match status" value="1"/>
</dbReference>
<name>PGMB_LACLA</name>